<sequence>MAFKLATKAAAASPAAAHRGGLARGPEGTSRVAFGPAPRNKGLRAANNSATPVAKEERVDRSEILTLDSIRQVLIRLEDSIIFGLLERAQFCYNADTYDSNAFHMDGFGGSLVEYMVRETEKLHAQVGRYKSPDEHPFFPEDLPEPRLPPMQYPRVLHPIADSININKEIWKMYFDELLPRLVKKGSDGNAGSSALCDTTCLQALSKRIHYGKFVAEAKFQESPEAYMPAIIAQDRDQLMHLLTYETVERAIEHRVEAKAKIFGQEVNIGVEDNGSPPVYKIVPSLVAELYSYRIMPLTKEVQIAYLLRRLD</sequence>
<feature type="transit peptide" description="Chloroplast" evidence="3">
    <location>
        <begin position="1"/>
        <end position="44"/>
    </location>
</feature>
<feature type="chain" id="PRO_0000446624" description="Chorismate mutase 1, chloroplastic">
    <location>
        <begin position="45"/>
        <end position="312"/>
    </location>
</feature>
<feature type="domain" description="Chorismate mutase" evidence="4">
    <location>
        <begin position="58"/>
        <end position="312"/>
    </location>
</feature>
<feature type="region of interest" description="Disordered" evidence="5">
    <location>
        <begin position="16"/>
        <end position="58"/>
    </location>
</feature>
<feature type="binding site" evidence="1">
    <location>
        <position position="58"/>
    </location>
    <ligand>
        <name>L-phenylalanine</name>
        <dbReference type="ChEBI" id="CHEBI:58095"/>
        <note>allosteric inhibitor</note>
    </ligand>
</feature>
<feature type="binding site" evidence="7 11">
    <location>
        <position position="58"/>
    </location>
    <ligand>
        <name>L-tyrosine</name>
        <dbReference type="ChEBI" id="CHEBI:58315"/>
        <note>allosteric inhibitor</note>
    </ligand>
</feature>
<feature type="binding site" evidence="1">
    <location>
        <begin position="190"/>
        <end position="193"/>
    </location>
    <ligand>
        <name>L-phenylalanine</name>
        <dbReference type="ChEBI" id="CHEBI:58095"/>
        <note>allosteric inhibitor</note>
    </ligand>
</feature>
<feature type="binding site" evidence="7 11">
    <location>
        <begin position="190"/>
        <end position="193"/>
    </location>
    <ligand>
        <name>L-tyrosine</name>
        <dbReference type="ChEBI" id="CHEBI:58315"/>
        <note>allosteric inhibitor</note>
    </ligand>
</feature>
<feature type="helix" evidence="12">
    <location>
        <begin position="67"/>
        <end position="69"/>
    </location>
</feature>
<feature type="helix" evidence="12">
    <location>
        <begin position="70"/>
        <end position="88"/>
    </location>
</feature>
<feature type="helix" evidence="12">
    <location>
        <begin position="95"/>
        <end position="97"/>
    </location>
</feature>
<feature type="strand" evidence="12">
    <location>
        <begin position="100"/>
        <end position="102"/>
    </location>
</feature>
<feature type="helix" evidence="12">
    <location>
        <begin position="112"/>
        <end position="125"/>
    </location>
</feature>
<feature type="turn" evidence="12">
    <location>
        <begin position="126"/>
        <end position="128"/>
    </location>
</feature>
<feature type="helix" evidence="12">
    <location>
        <begin position="129"/>
        <end position="131"/>
    </location>
</feature>
<feature type="helix" evidence="12">
    <location>
        <begin position="159"/>
        <end position="163"/>
    </location>
</feature>
<feature type="helix" evidence="12">
    <location>
        <begin position="167"/>
        <end position="176"/>
    </location>
</feature>
<feature type="helix" evidence="12">
    <location>
        <begin position="178"/>
        <end position="182"/>
    </location>
</feature>
<feature type="helix" evidence="12">
    <location>
        <begin position="191"/>
        <end position="209"/>
    </location>
</feature>
<feature type="helix" evidence="12">
    <location>
        <begin position="212"/>
        <end position="222"/>
    </location>
</feature>
<feature type="helix" evidence="12">
    <location>
        <begin position="224"/>
        <end position="232"/>
    </location>
</feature>
<feature type="helix" evidence="12">
    <location>
        <begin position="236"/>
        <end position="242"/>
    </location>
</feature>
<feature type="helix" evidence="12">
    <location>
        <begin position="246"/>
        <end position="262"/>
    </location>
</feature>
<feature type="helix" evidence="12">
    <location>
        <begin position="282"/>
        <end position="293"/>
    </location>
</feature>
<feature type="helix" evidence="12">
    <location>
        <begin position="296"/>
        <end position="308"/>
    </location>
</feature>
<reference key="1">
    <citation type="journal article" date="2009" name="Science">
        <title>The B73 maize genome: complexity, diversity, and dynamics.</title>
        <authorList>
            <person name="Schnable P.S."/>
            <person name="Ware D."/>
            <person name="Fulton R.S."/>
            <person name="Stein J.C."/>
            <person name="Wei F."/>
            <person name="Pasternak S."/>
            <person name="Liang C."/>
            <person name="Zhang J."/>
            <person name="Fulton L."/>
            <person name="Graves T.A."/>
            <person name="Minx P."/>
            <person name="Reily A.D."/>
            <person name="Courtney L."/>
            <person name="Kruchowski S.S."/>
            <person name="Tomlinson C."/>
            <person name="Strong C."/>
            <person name="Delehaunty K."/>
            <person name="Fronick C."/>
            <person name="Courtney B."/>
            <person name="Rock S.M."/>
            <person name="Belter E."/>
            <person name="Du F."/>
            <person name="Kim K."/>
            <person name="Abbott R.M."/>
            <person name="Cotton M."/>
            <person name="Levy A."/>
            <person name="Marchetto P."/>
            <person name="Ochoa K."/>
            <person name="Jackson S.M."/>
            <person name="Gillam B."/>
            <person name="Chen W."/>
            <person name="Yan L."/>
            <person name="Higginbotham J."/>
            <person name="Cardenas M."/>
            <person name="Waligorski J."/>
            <person name="Applebaum E."/>
            <person name="Phelps L."/>
            <person name="Falcone J."/>
            <person name="Kanchi K."/>
            <person name="Thane T."/>
            <person name="Scimone A."/>
            <person name="Thane N."/>
            <person name="Henke J."/>
            <person name="Wang T."/>
            <person name="Ruppert J."/>
            <person name="Shah N."/>
            <person name="Rotter K."/>
            <person name="Hodges J."/>
            <person name="Ingenthron E."/>
            <person name="Cordes M."/>
            <person name="Kohlberg S."/>
            <person name="Sgro J."/>
            <person name="Delgado B."/>
            <person name="Mead K."/>
            <person name="Chinwalla A."/>
            <person name="Leonard S."/>
            <person name="Crouse K."/>
            <person name="Collura K."/>
            <person name="Kudrna D."/>
            <person name="Currie J."/>
            <person name="He R."/>
            <person name="Angelova A."/>
            <person name="Rajasekar S."/>
            <person name="Mueller T."/>
            <person name="Lomeli R."/>
            <person name="Scara G."/>
            <person name="Ko A."/>
            <person name="Delaney K."/>
            <person name="Wissotski M."/>
            <person name="Lopez G."/>
            <person name="Campos D."/>
            <person name="Braidotti M."/>
            <person name="Ashley E."/>
            <person name="Golser W."/>
            <person name="Kim H."/>
            <person name="Lee S."/>
            <person name="Lin J."/>
            <person name="Dujmic Z."/>
            <person name="Kim W."/>
            <person name="Talag J."/>
            <person name="Zuccolo A."/>
            <person name="Fan C."/>
            <person name="Sebastian A."/>
            <person name="Kramer M."/>
            <person name="Spiegel L."/>
            <person name="Nascimento L."/>
            <person name="Zutavern T."/>
            <person name="Miller B."/>
            <person name="Ambroise C."/>
            <person name="Muller S."/>
            <person name="Spooner W."/>
            <person name="Narechania A."/>
            <person name="Ren L."/>
            <person name="Wei S."/>
            <person name="Kumari S."/>
            <person name="Faga B."/>
            <person name="Levy M.J."/>
            <person name="McMahan L."/>
            <person name="Van Buren P."/>
            <person name="Vaughn M.W."/>
            <person name="Ying K."/>
            <person name="Yeh C.-T."/>
            <person name="Emrich S.J."/>
            <person name="Jia Y."/>
            <person name="Kalyanaraman A."/>
            <person name="Hsia A.-P."/>
            <person name="Barbazuk W.B."/>
            <person name="Baucom R.S."/>
            <person name="Brutnell T.P."/>
            <person name="Carpita N.C."/>
            <person name="Chaparro C."/>
            <person name="Chia J.-M."/>
            <person name="Deragon J.-M."/>
            <person name="Estill J.C."/>
            <person name="Fu Y."/>
            <person name="Jeddeloh J.A."/>
            <person name="Han Y."/>
            <person name="Lee H."/>
            <person name="Li P."/>
            <person name="Lisch D.R."/>
            <person name="Liu S."/>
            <person name="Liu Z."/>
            <person name="Nagel D.H."/>
            <person name="McCann M.C."/>
            <person name="SanMiguel P."/>
            <person name="Myers A.M."/>
            <person name="Nettleton D."/>
            <person name="Nguyen J."/>
            <person name="Penning B.W."/>
            <person name="Ponnala L."/>
            <person name="Schneider K.L."/>
            <person name="Schwartz D.C."/>
            <person name="Sharma A."/>
            <person name="Soderlund C."/>
            <person name="Springer N.M."/>
            <person name="Sun Q."/>
            <person name="Wang H."/>
            <person name="Waterman M."/>
            <person name="Westerman R."/>
            <person name="Wolfgruber T.K."/>
            <person name="Yang L."/>
            <person name="Yu Y."/>
            <person name="Zhang L."/>
            <person name="Zhou S."/>
            <person name="Zhu Q."/>
            <person name="Bennetzen J.L."/>
            <person name="Dawe R.K."/>
            <person name="Jiang J."/>
            <person name="Jiang N."/>
            <person name="Presting G.G."/>
            <person name="Wessler S.R."/>
            <person name="Aluru S."/>
            <person name="Martienssen R.A."/>
            <person name="Clifton S.W."/>
            <person name="McCombie W.R."/>
            <person name="Wing R.A."/>
            <person name="Wilson R.K."/>
        </authorList>
    </citation>
    <scope>NUCLEOTIDE SEQUENCE [LARGE SCALE GENOMIC DNA]</scope>
    <source>
        <strain>cv. B73</strain>
    </source>
</reference>
<reference key="2">
    <citation type="journal article" date="2009" name="PLoS Genet.">
        <title>Sequencing, mapping, and analysis of 27,455 maize full-length cDNAs.</title>
        <authorList>
            <person name="Soderlund C."/>
            <person name="Descour A."/>
            <person name="Kudrna D."/>
            <person name="Bomhoff M."/>
            <person name="Boyd L."/>
            <person name="Currie J."/>
            <person name="Angelova A."/>
            <person name="Collura K."/>
            <person name="Wissotski M."/>
            <person name="Ashley E."/>
            <person name="Morrow D."/>
            <person name="Fernandes J."/>
            <person name="Walbot V."/>
            <person name="Yu Y."/>
        </authorList>
    </citation>
    <scope>NUCLEOTIDE SEQUENCE [LARGE SCALE MRNA]</scope>
    <source>
        <strain>cv. B73</strain>
    </source>
</reference>
<reference key="3">
    <citation type="journal article" date="2011" name="Nature">
        <title>Metabolic priming by a secreted fungal effector.</title>
        <authorList>
            <person name="Djamei A."/>
            <person name="Schipper K."/>
            <person name="Rabe F."/>
            <person name="Ghosh A."/>
            <person name="Vincon V."/>
            <person name="Kahnt J."/>
            <person name="Osorio S."/>
            <person name="Tohge T."/>
            <person name="Fernie A.R."/>
            <person name="Feussner I."/>
            <person name="Feussner K."/>
            <person name="Meinicke P."/>
            <person name="Stierhof Y.D."/>
            <person name="Schwarz H."/>
            <person name="Macek B."/>
            <person name="Mann M."/>
            <person name="Kahmann R."/>
        </authorList>
    </citation>
    <scope>HOMODIMERIZATION</scope>
    <scope>INTERACTION WITH USTILAGO MAYDIS CMU1</scope>
    <scope>SUBCELLULAR LOCATION</scope>
</reference>
<reference evidence="11" key="4">
    <citation type="journal article" date="2019" name="Nature">
        <title>A kiwellin disarms the metabolic activity of a secreted fungal virulence factor.</title>
        <authorList>
            <person name="Han X."/>
            <person name="Altegoer F."/>
            <person name="Steinchen W."/>
            <person name="Binnebesel L."/>
            <person name="Schuhmacher J."/>
            <person name="Glatter T."/>
            <person name="Giammarinaro P.I."/>
            <person name="Djamei A."/>
            <person name="Rensing S.A."/>
            <person name="Reissmann S."/>
            <person name="Kahmann R."/>
            <person name="Bange G."/>
        </authorList>
    </citation>
    <scope>X-RAY CRYSTALLOGRAPHY (2.50 ANGSTROMS) IN COMPLEX WITH L-TYROSINE</scope>
</reference>
<protein>
    <recommendedName>
        <fullName evidence="9">Chorismate mutase 1, chloroplastic</fullName>
        <shortName evidence="8">ZmCM1</shortName>
        <ecNumber evidence="4">5.4.99.5</ecNumber>
    </recommendedName>
</protein>
<evidence type="ECO:0000250" key="1">
    <source>
        <dbReference type="UniProtKB" id="P42738"/>
    </source>
</evidence>
<evidence type="ECO:0000250" key="2">
    <source>
        <dbReference type="UniProtKB" id="Q9C544"/>
    </source>
</evidence>
<evidence type="ECO:0000255" key="3"/>
<evidence type="ECO:0000255" key="4">
    <source>
        <dbReference type="PROSITE-ProRule" id="PRU00516"/>
    </source>
</evidence>
<evidence type="ECO:0000256" key="5">
    <source>
        <dbReference type="SAM" id="MobiDB-lite"/>
    </source>
</evidence>
<evidence type="ECO:0000269" key="6">
    <source>
    </source>
</evidence>
<evidence type="ECO:0000269" key="7">
    <source>
    </source>
</evidence>
<evidence type="ECO:0000303" key="8">
    <source>
    </source>
</evidence>
<evidence type="ECO:0000305" key="9"/>
<evidence type="ECO:0000312" key="10">
    <source>
        <dbReference type="EMBL" id="ONM37680.1"/>
    </source>
</evidence>
<evidence type="ECO:0007744" key="11">
    <source>
        <dbReference type="PDB" id="6HJW"/>
    </source>
</evidence>
<evidence type="ECO:0007829" key="12">
    <source>
        <dbReference type="PDB" id="6HJW"/>
    </source>
</evidence>
<dbReference type="EC" id="5.4.99.5" evidence="4"/>
<dbReference type="EMBL" id="CM007649">
    <property type="protein sequence ID" value="ONM37680.1"/>
    <property type="molecule type" value="Genomic_DNA"/>
</dbReference>
<dbReference type="EMBL" id="CM007649">
    <property type="protein sequence ID" value="ONM37683.1"/>
    <property type="molecule type" value="Genomic_DNA"/>
</dbReference>
<dbReference type="EMBL" id="BT038696">
    <property type="protein sequence ID" value="ACF83701.1"/>
    <property type="molecule type" value="mRNA"/>
</dbReference>
<dbReference type="RefSeq" id="NP_001140378.1">
    <property type="nucleotide sequence ID" value="NM_001146906.1"/>
</dbReference>
<dbReference type="PDB" id="6HJW">
    <property type="method" value="X-ray"/>
    <property type="resolution" value="2.50 A"/>
    <property type="chains" value="A/B=1-312"/>
</dbReference>
<dbReference type="PDBsum" id="6HJW"/>
<dbReference type="SMR" id="B4FNK8"/>
<dbReference type="FunCoup" id="B4FNK8">
    <property type="interactions" value="655"/>
</dbReference>
<dbReference type="STRING" id="4577.B4FNK8"/>
<dbReference type="PaxDb" id="4577-GRMZM2G028369_P01"/>
<dbReference type="EnsemblPlants" id="Zm00001eb152250_T001">
    <property type="protein sequence ID" value="Zm00001eb152250_P001"/>
    <property type="gene ID" value="Zm00001eb152250"/>
</dbReference>
<dbReference type="GeneID" id="100272431"/>
<dbReference type="Gramene" id="Zm00001eb152250_T001">
    <property type="protein sequence ID" value="Zm00001eb152250_P001"/>
    <property type="gene ID" value="Zm00001eb152250"/>
</dbReference>
<dbReference type="KEGG" id="zma:100272431"/>
<dbReference type="eggNOG" id="KOG0795">
    <property type="taxonomic scope" value="Eukaryota"/>
</dbReference>
<dbReference type="HOGENOM" id="CLU_057757_1_1_1"/>
<dbReference type="InParanoid" id="B4FNK8"/>
<dbReference type="OMA" id="NAFFMDG"/>
<dbReference type="OrthoDB" id="191918at2759"/>
<dbReference type="UniPathway" id="UPA00120">
    <property type="reaction ID" value="UER00203"/>
</dbReference>
<dbReference type="Proteomes" id="UP000007305">
    <property type="component" value="Chromosome 3"/>
</dbReference>
<dbReference type="ExpressionAtlas" id="B4FNK8">
    <property type="expression patterns" value="baseline and differential"/>
</dbReference>
<dbReference type="GO" id="GO:0009507">
    <property type="term" value="C:chloroplast"/>
    <property type="evidence" value="ECO:0000314"/>
    <property type="project" value="UniProtKB"/>
</dbReference>
<dbReference type="GO" id="GO:0005737">
    <property type="term" value="C:cytoplasm"/>
    <property type="evidence" value="ECO:0000318"/>
    <property type="project" value="GO_Central"/>
</dbReference>
<dbReference type="GO" id="GO:0004106">
    <property type="term" value="F:chorismate mutase activity"/>
    <property type="evidence" value="ECO:0000318"/>
    <property type="project" value="GO_Central"/>
</dbReference>
<dbReference type="GO" id="GO:0042803">
    <property type="term" value="F:protein homodimerization activity"/>
    <property type="evidence" value="ECO:0000353"/>
    <property type="project" value="UniProtKB"/>
</dbReference>
<dbReference type="GO" id="GO:0008652">
    <property type="term" value="P:amino acid biosynthetic process"/>
    <property type="evidence" value="ECO:0007669"/>
    <property type="project" value="UniProtKB-KW"/>
</dbReference>
<dbReference type="GO" id="GO:0009073">
    <property type="term" value="P:aromatic amino acid family biosynthetic process"/>
    <property type="evidence" value="ECO:0000318"/>
    <property type="project" value="GO_Central"/>
</dbReference>
<dbReference type="GO" id="GO:0046417">
    <property type="term" value="P:chorismate metabolic process"/>
    <property type="evidence" value="ECO:0007669"/>
    <property type="project" value="InterPro"/>
</dbReference>
<dbReference type="FunFam" id="1.10.590.10:FF:000001">
    <property type="entry name" value="Chorismate mutase"/>
    <property type="match status" value="1"/>
</dbReference>
<dbReference type="Gene3D" id="1.10.590.10">
    <property type="entry name" value="Chorismate mutase, AroQ class superfamily, eukaryotic"/>
    <property type="match status" value="1"/>
</dbReference>
<dbReference type="InterPro" id="IPR036263">
    <property type="entry name" value="Chorismate_II_sf"/>
</dbReference>
<dbReference type="InterPro" id="IPR008238">
    <property type="entry name" value="Chorismate_mutase_AroQ_euk"/>
</dbReference>
<dbReference type="InterPro" id="IPR037039">
    <property type="entry name" value="CM_AroQ_sf_eucaryotic"/>
</dbReference>
<dbReference type="InterPro" id="IPR002701">
    <property type="entry name" value="CM_II_prokaryot"/>
</dbReference>
<dbReference type="NCBIfam" id="TIGR01802">
    <property type="entry name" value="CM_pl-yst"/>
    <property type="match status" value="1"/>
</dbReference>
<dbReference type="PANTHER" id="PTHR21145">
    <property type="entry name" value="CHORISMATE MUTASE"/>
    <property type="match status" value="1"/>
</dbReference>
<dbReference type="PANTHER" id="PTHR21145:SF0">
    <property type="entry name" value="CHORISMATE MUTASE 1, CHLOROPLASTIC"/>
    <property type="match status" value="1"/>
</dbReference>
<dbReference type="Pfam" id="PF01817">
    <property type="entry name" value="CM_2"/>
    <property type="match status" value="1"/>
</dbReference>
<dbReference type="PIRSF" id="PIRSF017318">
    <property type="entry name" value="Chor_mut_AroQ_eu"/>
    <property type="match status" value="1"/>
</dbReference>
<dbReference type="SUPFAM" id="SSF48600">
    <property type="entry name" value="Chorismate mutase II"/>
    <property type="match status" value="1"/>
</dbReference>
<dbReference type="PROSITE" id="PS51169">
    <property type="entry name" value="CHORISMATE_MUT_3"/>
    <property type="match status" value="1"/>
</dbReference>
<gene>
    <name evidence="8" type="primary">CM1</name>
    <name evidence="10" type="ORF">ZEAMMB73_Zm00001d043356</name>
</gene>
<comment type="function">
    <text evidence="9">May play a role in chloroplast biogenesis.</text>
</comment>
<comment type="catalytic activity">
    <reaction evidence="4">
        <text>chorismate = prephenate</text>
        <dbReference type="Rhea" id="RHEA:13897"/>
        <dbReference type="ChEBI" id="CHEBI:29748"/>
        <dbReference type="ChEBI" id="CHEBI:29934"/>
        <dbReference type="EC" id="5.4.99.5"/>
    </reaction>
</comment>
<comment type="activity regulation">
    <text evidence="2">Allosterically inhibited by tyrosine and phenylalanine. Activated by tryptophan.</text>
</comment>
<comment type="pathway">
    <text evidence="1">Metabolic intermediate biosynthesis; prephenate biosynthesis; prephenate from chorismate: step 1/1.</text>
</comment>
<comment type="subunit">
    <text evidence="6">Homodimer (PubMed:21976020). Interacts with Cmu1 of the fungal pathogen Ustilago maydis (PubMed:21976020).</text>
</comment>
<comment type="subcellular location">
    <subcellularLocation>
        <location evidence="6">Plastid</location>
        <location evidence="6">Chloroplast</location>
    </subcellularLocation>
</comment>
<accession>B4FNK8</accession>
<proteinExistence type="evidence at protein level"/>
<organism>
    <name type="scientific">Zea mays</name>
    <name type="common">Maize</name>
    <dbReference type="NCBI Taxonomy" id="4577"/>
    <lineage>
        <taxon>Eukaryota</taxon>
        <taxon>Viridiplantae</taxon>
        <taxon>Streptophyta</taxon>
        <taxon>Embryophyta</taxon>
        <taxon>Tracheophyta</taxon>
        <taxon>Spermatophyta</taxon>
        <taxon>Magnoliopsida</taxon>
        <taxon>Liliopsida</taxon>
        <taxon>Poales</taxon>
        <taxon>Poaceae</taxon>
        <taxon>PACMAD clade</taxon>
        <taxon>Panicoideae</taxon>
        <taxon>Andropogonodae</taxon>
        <taxon>Andropogoneae</taxon>
        <taxon>Tripsacinae</taxon>
        <taxon>Zea</taxon>
    </lineage>
</organism>
<keyword id="KW-0002">3D-structure</keyword>
<keyword id="KW-0021">Allosteric enzyme</keyword>
<keyword id="KW-0028">Amino-acid biosynthesis</keyword>
<keyword id="KW-0057">Aromatic amino acid biosynthesis</keyword>
<keyword id="KW-0150">Chloroplast</keyword>
<keyword id="KW-0413">Isomerase</keyword>
<keyword id="KW-0934">Plastid</keyword>
<keyword id="KW-1185">Reference proteome</keyword>
<keyword id="KW-0809">Transit peptide</keyword>
<name>CM1_MAIZE</name>